<comment type="function">
    <text evidence="7 8 9 10 11 12">Member of the two-component regulatory system GacA/GacS which controls the expression of secondary metabolites and extracellular products. Activates GacA by phosphorylation (Probable). GacA acts (probably primarily) by activating expression of CsrA1 and CsrA2 antagonist small RNAs (sRNA) RsmX, RsmY and RsmZ which bind to and prevent translation repression by CsrA1 and CsrA2 (PubMed:11807065, PubMed:14622422, PubMed:15601712, PubMed:16286659). Involved in the regulation of secondary metabolism and in the synthesis of the antifungal factors cyanide, 2,4-diacetylphloroglucinol and pyoluteorin (PubMed:15601712). Exercises positive post-transcriptional control over the hcnABC and aprA genes; acts upstream of CsrA2 (rsmA) (PubMed:10570200). Controls expression of CsrA1 and CsrA2 antagonist sRNAs RsmX, RsmY and probably RsmZ (PubMed:11807065, PubMed:14622422, PubMed:15601712, PubMed:16286659). Probably controls expression of csrA1 (rsmE) and csrA2 (PubMed:15601712).</text>
</comment>
<comment type="catalytic activity">
    <reaction>
        <text>ATP + protein L-histidine = ADP + protein N-phospho-L-histidine.</text>
        <dbReference type="EC" id="2.7.13.3"/>
    </reaction>
</comment>
<comment type="subcellular location">
    <subcellularLocation>
        <location evidence="2">Cell inner membrane</location>
        <topology evidence="2">Multi-pass membrane protein</topology>
    </subcellularLocation>
</comment>
<comment type="PTM">
    <text evidence="1">Activation requires a sequential transfer of a phosphate group from a His in the primary transmitter domain, to an Asp in the receiver domain and to a His in the secondary transmitter domain.</text>
</comment>
<comment type="disruption phenotype">
    <text evidence="7 8 9 10 11">Greatly decreased expression of aprA, hcnA and phlA (PubMed:10570200, PubMed:11807065, PubMed:14622422, PubMed:15601712). Partially suppressed by a deletion of csrA2 (rsmA) (PubMed:10570200, PubMed:15601712). Fully suppressed by deletion of csrA1 (rsmE) and csrA2 (PubMed:15601712). Its deletion is also suppressed by overexpression of small RNAs (sRNA) RsmZ and RsmY (PubMed:11807065, PubMed:14622422). Loss of expression of sRNA RsmY (PubMed:14622422). Loss of protection of cucumber plants from fungal infection (PubMed:14622422, PubMed:16286659).</text>
</comment>
<name>GACS_PSEPH</name>
<protein>
    <recommendedName>
        <fullName>Sensor histidine kinase GacS</fullName>
        <ecNumber>2.7.13.3</ecNumber>
    </recommendedName>
</protein>
<organism>
    <name type="scientific">Pseudomonas protegens (strain DSM 19095 / LMG 27888 / CFBP 6595 / CHA0)</name>
    <dbReference type="NCBI Taxonomy" id="1124983"/>
    <lineage>
        <taxon>Bacteria</taxon>
        <taxon>Pseudomonadati</taxon>
        <taxon>Pseudomonadota</taxon>
        <taxon>Gammaproteobacteria</taxon>
        <taxon>Pseudomonadales</taxon>
        <taxon>Pseudomonadaceae</taxon>
        <taxon>Pseudomonas</taxon>
    </lineage>
</organism>
<evidence type="ECO:0000250" key="1"/>
<evidence type="ECO:0000255" key="2"/>
<evidence type="ECO:0000255" key="3">
    <source>
        <dbReference type="PROSITE-ProRule" id="PRU00102"/>
    </source>
</evidence>
<evidence type="ECO:0000255" key="4">
    <source>
        <dbReference type="PROSITE-ProRule" id="PRU00107"/>
    </source>
</evidence>
<evidence type="ECO:0000255" key="5">
    <source>
        <dbReference type="PROSITE-ProRule" id="PRU00110"/>
    </source>
</evidence>
<evidence type="ECO:0000255" key="6">
    <source>
        <dbReference type="PROSITE-ProRule" id="PRU00169"/>
    </source>
</evidence>
<evidence type="ECO:0000269" key="7">
    <source>
    </source>
</evidence>
<evidence type="ECO:0000269" key="8">
    <source>
    </source>
</evidence>
<evidence type="ECO:0000269" key="9">
    <source>
    </source>
</evidence>
<evidence type="ECO:0000269" key="10">
    <source>
    </source>
</evidence>
<evidence type="ECO:0000269" key="11">
    <source>
    </source>
</evidence>
<evidence type="ECO:0000305" key="12"/>
<accession>Q9F8D7</accession>
<reference key="1">
    <citation type="submission" date="2000-03" db="EMBL/GenBank/DDBJ databases">
        <title>Pseudomonas fluorescens CHA0 sensor kinase (gacS) gene.</title>
        <authorList>
            <person name="Blumer C."/>
            <person name="Carruthers F."/>
            <person name="Mattart A."/>
            <person name="Reimmann C."/>
            <person name="Pechy M."/>
            <person name="Pessi G."/>
            <person name="Heeb S."/>
            <person name="Haas D."/>
        </authorList>
    </citation>
    <scope>NUCLEOTIDE SEQUENCE [GENOMIC DNA]</scope>
    <source>
        <strain>DSM 19095 / LMG 27888 / CFBP 6595 / CHA0</strain>
    </source>
</reference>
<reference key="2">
    <citation type="journal article" date="1999" name="Proc. Natl. Acad. Sci. U.S.A.">
        <title>Global GacA-steered control of cyanide and exoprotease production in Pseudomonas fluorescens involves specific ribosome binding sites.</title>
        <authorList>
            <person name="Blumer C."/>
            <person name="Heeb S."/>
            <person name="Pessi G."/>
            <person name="Haas D."/>
        </authorList>
    </citation>
    <scope>DISRUPTION PHENOTYPE</scope>
    <source>
        <strain>DSM 19095 / LMG 27888 / CFBP 6595 / CHA0</strain>
    </source>
</reference>
<reference key="3">
    <citation type="journal article" date="2002" name="J. Bacteriol.">
        <title>Regulatory RNA as mediator in GacA/RsmA-dependent global control of exoproduct formation in Pseudomonas fluorescens CHA0.</title>
        <authorList>
            <person name="Heeb S."/>
            <person name="Blumer C."/>
            <person name="Haas D."/>
        </authorList>
    </citation>
    <scope>FUNCTION</scope>
    <scope>DISRUPTION PHENOTYPE</scope>
    <source>
        <strain>DSM 19095 / LMG 27888 / CFBP 6595 / CHA0</strain>
    </source>
</reference>
<reference key="4">
    <citation type="journal article" date="2003" name="Mol. Microbiol.">
        <title>RsmY, a small regulatory RNA, is required in concert with RsmZ for GacA-dependent expression of biocontrol traits in Pseudomonas fluorescens CHA0.</title>
        <authorList>
            <person name="Valverde C."/>
            <person name="Heeb S."/>
            <person name="Keel C."/>
            <person name="Haas D."/>
        </authorList>
    </citation>
    <scope>FUNCTION</scope>
    <scope>DISRUPTION PHENOTYPE</scope>
    <source>
        <strain>DSM 19095 / LMG 27888 / CFBP 6595 / CHA0</strain>
    </source>
</reference>
<reference key="5">
    <citation type="journal article" date="2005" name="J. Bacteriol.">
        <title>Posttranscriptional repression of GacS/GacA-controlled genes by the RNA-binding protein RsmE acting together with RsmA in the biocontrol strain Pseudomonas fluorescens CHA0.</title>
        <authorList>
            <person name="Reimmann C."/>
            <person name="Valverde C."/>
            <person name="Kay E."/>
            <person name="Haas D."/>
        </authorList>
    </citation>
    <scope>FUNCTION</scope>
    <scope>DISRUPTION PHENOTYPE</scope>
    <source>
        <strain>DSM 19095 / LMG 27888 / CFBP 6595 / CHA0</strain>
    </source>
</reference>
<reference key="6">
    <citation type="journal article" date="2005" name="Proc. Natl. Acad. Sci. U.S.A.">
        <title>Three small RNAs jointly ensure secondary metabolism and biocontrol in Pseudomonas fluorescens CHA0.</title>
        <authorList>
            <person name="Kay E."/>
            <person name="Dubuis C."/>
            <person name="Haas D."/>
        </authorList>
    </citation>
    <scope>FUNCTION</scope>
    <scope>DISRUPTION PHENOTYPE</scope>
    <source>
        <strain>DSM 19095 / LMG 27888 / CFBP 6595 / CHA0</strain>
    </source>
</reference>
<keyword id="KW-0067">ATP-binding</keyword>
<keyword id="KW-0997">Cell inner membrane</keyword>
<keyword id="KW-1003">Cell membrane</keyword>
<keyword id="KW-0418">Kinase</keyword>
<keyword id="KW-0472">Membrane</keyword>
<keyword id="KW-0547">Nucleotide-binding</keyword>
<keyword id="KW-0597">Phosphoprotein</keyword>
<keyword id="KW-0808">Transferase</keyword>
<keyword id="KW-0812">Transmembrane</keyword>
<keyword id="KW-1133">Transmembrane helix</keyword>
<keyword id="KW-0902">Two-component regulatory system</keyword>
<gene>
    <name type="primary">gacS</name>
    <name type="synonym">lemA</name>
</gene>
<dbReference type="EC" id="2.7.13.3"/>
<dbReference type="EMBL" id="AF246292">
    <property type="protein sequence ID" value="AAG13658.1"/>
    <property type="molecule type" value="Genomic_DNA"/>
</dbReference>
<dbReference type="RefSeq" id="WP_011062714.1">
    <property type="nucleotide sequence ID" value="NZ_LS999205.1"/>
</dbReference>
<dbReference type="SMR" id="Q9F8D7"/>
<dbReference type="eggNOG" id="COG0784">
    <property type="taxonomic scope" value="Bacteria"/>
</dbReference>
<dbReference type="eggNOG" id="COG2205">
    <property type="taxonomic scope" value="Bacteria"/>
</dbReference>
<dbReference type="eggNOG" id="COG5002">
    <property type="taxonomic scope" value="Bacteria"/>
</dbReference>
<dbReference type="GO" id="GO:0005886">
    <property type="term" value="C:plasma membrane"/>
    <property type="evidence" value="ECO:0007669"/>
    <property type="project" value="UniProtKB-SubCell"/>
</dbReference>
<dbReference type="GO" id="GO:0005524">
    <property type="term" value="F:ATP binding"/>
    <property type="evidence" value="ECO:0007669"/>
    <property type="project" value="UniProtKB-KW"/>
</dbReference>
<dbReference type="GO" id="GO:0000155">
    <property type="term" value="F:phosphorelay sensor kinase activity"/>
    <property type="evidence" value="ECO:0007669"/>
    <property type="project" value="InterPro"/>
</dbReference>
<dbReference type="CDD" id="cd06225">
    <property type="entry name" value="HAMP"/>
    <property type="match status" value="1"/>
</dbReference>
<dbReference type="CDD" id="cd16922">
    <property type="entry name" value="HATPase_EvgS-ArcB-TorS-like"/>
    <property type="match status" value="1"/>
</dbReference>
<dbReference type="CDD" id="cd00082">
    <property type="entry name" value="HisKA"/>
    <property type="match status" value="1"/>
</dbReference>
<dbReference type="CDD" id="cd00088">
    <property type="entry name" value="HPT"/>
    <property type="match status" value="1"/>
</dbReference>
<dbReference type="CDD" id="cd17546">
    <property type="entry name" value="REC_hyHK_CKI1_RcsC-like"/>
    <property type="match status" value="1"/>
</dbReference>
<dbReference type="FunFam" id="1.10.287.130:FF:000003">
    <property type="entry name" value="Histidine kinase"/>
    <property type="match status" value="1"/>
</dbReference>
<dbReference type="FunFam" id="3.30.565.10:FF:000010">
    <property type="entry name" value="Sensor histidine kinase RcsC"/>
    <property type="match status" value="1"/>
</dbReference>
<dbReference type="Gene3D" id="1.10.287.130">
    <property type="match status" value="1"/>
</dbReference>
<dbReference type="Gene3D" id="3.40.50.2300">
    <property type="match status" value="1"/>
</dbReference>
<dbReference type="Gene3D" id="6.10.340.10">
    <property type="match status" value="1"/>
</dbReference>
<dbReference type="Gene3D" id="3.30.565.10">
    <property type="entry name" value="Histidine kinase-like ATPase, C-terminal domain"/>
    <property type="match status" value="1"/>
</dbReference>
<dbReference type="Gene3D" id="1.20.120.160">
    <property type="entry name" value="HPT domain"/>
    <property type="match status" value="1"/>
</dbReference>
<dbReference type="InterPro" id="IPR011006">
    <property type="entry name" value="CheY-like_superfamily"/>
</dbReference>
<dbReference type="InterPro" id="IPR003660">
    <property type="entry name" value="HAMP_dom"/>
</dbReference>
<dbReference type="InterPro" id="IPR036890">
    <property type="entry name" value="HATPase_C_sf"/>
</dbReference>
<dbReference type="InterPro" id="IPR005467">
    <property type="entry name" value="His_kinase_dom"/>
</dbReference>
<dbReference type="InterPro" id="IPR003661">
    <property type="entry name" value="HisK_dim/P_dom"/>
</dbReference>
<dbReference type="InterPro" id="IPR036097">
    <property type="entry name" value="HisK_dim/P_sf"/>
</dbReference>
<dbReference type="InterPro" id="IPR019247">
    <property type="entry name" value="Histidine_kinase_BarA_N"/>
</dbReference>
<dbReference type="InterPro" id="IPR036641">
    <property type="entry name" value="HPT_dom_sf"/>
</dbReference>
<dbReference type="InterPro" id="IPR004358">
    <property type="entry name" value="Sig_transdc_His_kin-like_C"/>
</dbReference>
<dbReference type="InterPro" id="IPR008207">
    <property type="entry name" value="Sig_transdc_His_kin_Hpt_dom"/>
</dbReference>
<dbReference type="InterPro" id="IPR001789">
    <property type="entry name" value="Sig_transdc_resp-reg_receiver"/>
</dbReference>
<dbReference type="PANTHER" id="PTHR45339">
    <property type="entry name" value="HYBRID SIGNAL TRANSDUCTION HISTIDINE KINASE J"/>
    <property type="match status" value="1"/>
</dbReference>
<dbReference type="PANTHER" id="PTHR45339:SF1">
    <property type="entry name" value="HYBRID SIGNAL TRANSDUCTION HISTIDINE KINASE J"/>
    <property type="match status" value="1"/>
</dbReference>
<dbReference type="Pfam" id="PF00672">
    <property type="entry name" value="HAMP"/>
    <property type="match status" value="1"/>
</dbReference>
<dbReference type="Pfam" id="PF02518">
    <property type="entry name" value="HATPase_c"/>
    <property type="match status" value="1"/>
</dbReference>
<dbReference type="Pfam" id="PF00512">
    <property type="entry name" value="HisKA"/>
    <property type="match status" value="1"/>
</dbReference>
<dbReference type="Pfam" id="PF01627">
    <property type="entry name" value="Hpt"/>
    <property type="match status" value="1"/>
</dbReference>
<dbReference type="Pfam" id="PF00072">
    <property type="entry name" value="Response_reg"/>
    <property type="match status" value="1"/>
</dbReference>
<dbReference type="Pfam" id="PF09984">
    <property type="entry name" value="sCache_4"/>
    <property type="match status" value="1"/>
</dbReference>
<dbReference type="PRINTS" id="PR00344">
    <property type="entry name" value="BCTRLSENSOR"/>
</dbReference>
<dbReference type="SMART" id="SM00304">
    <property type="entry name" value="HAMP"/>
    <property type="match status" value="1"/>
</dbReference>
<dbReference type="SMART" id="SM00387">
    <property type="entry name" value="HATPase_c"/>
    <property type="match status" value="1"/>
</dbReference>
<dbReference type="SMART" id="SM00388">
    <property type="entry name" value="HisKA"/>
    <property type="match status" value="1"/>
</dbReference>
<dbReference type="SMART" id="SM00073">
    <property type="entry name" value="HPT"/>
    <property type="match status" value="1"/>
</dbReference>
<dbReference type="SMART" id="SM00448">
    <property type="entry name" value="REC"/>
    <property type="match status" value="1"/>
</dbReference>
<dbReference type="SUPFAM" id="SSF55874">
    <property type="entry name" value="ATPase domain of HSP90 chaperone/DNA topoisomerase II/histidine kinase"/>
    <property type="match status" value="1"/>
</dbReference>
<dbReference type="SUPFAM" id="SSF52172">
    <property type="entry name" value="CheY-like"/>
    <property type="match status" value="2"/>
</dbReference>
<dbReference type="SUPFAM" id="SSF158472">
    <property type="entry name" value="HAMP domain-like"/>
    <property type="match status" value="1"/>
</dbReference>
<dbReference type="SUPFAM" id="SSF47226">
    <property type="entry name" value="Histidine-containing phosphotransfer domain, HPT domain"/>
    <property type="match status" value="1"/>
</dbReference>
<dbReference type="SUPFAM" id="SSF47384">
    <property type="entry name" value="Homodimeric domain of signal transducing histidine kinase"/>
    <property type="match status" value="1"/>
</dbReference>
<dbReference type="PROSITE" id="PS50885">
    <property type="entry name" value="HAMP"/>
    <property type="match status" value="1"/>
</dbReference>
<dbReference type="PROSITE" id="PS50109">
    <property type="entry name" value="HIS_KIN"/>
    <property type="match status" value="1"/>
</dbReference>
<dbReference type="PROSITE" id="PS50894">
    <property type="entry name" value="HPT"/>
    <property type="match status" value="1"/>
</dbReference>
<dbReference type="PROSITE" id="PS50110">
    <property type="entry name" value="RESPONSE_REGULATORY"/>
    <property type="match status" value="1"/>
</dbReference>
<feature type="chain" id="PRO_0000442646" description="Sensor histidine kinase GacS">
    <location>
        <begin position="1"/>
        <end position="917"/>
    </location>
</feature>
<feature type="transmembrane region" description="Helical" evidence="2">
    <location>
        <begin position="11"/>
        <end position="31"/>
    </location>
</feature>
<feature type="transmembrane region" description="Helical" evidence="2">
    <location>
        <begin position="168"/>
        <end position="188"/>
    </location>
</feature>
<feature type="domain" description="HAMP" evidence="3">
    <location>
        <begin position="192"/>
        <end position="244"/>
    </location>
</feature>
<feature type="domain" description="Histidine kinase" evidence="4">
    <location>
        <begin position="291"/>
        <end position="512"/>
    </location>
</feature>
<feature type="domain" description="Response regulatory" evidence="6">
    <location>
        <begin position="668"/>
        <end position="787"/>
    </location>
</feature>
<feature type="domain" description="HPt" evidence="5">
    <location>
        <begin position="824"/>
        <end position="917"/>
    </location>
</feature>
<feature type="modified residue" description="Phosphohistidine; by autocatalysis" evidence="4">
    <location>
        <position position="294"/>
    </location>
</feature>
<feature type="modified residue" description="4-aspartylphosphate" evidence="6">
    <location>
        <position position="717"/>
    </location>
</feature>
<feature type="modified residue" description="Phosphohistidine" evidence="5">
    <location>
        <position position="863"/>
    </location>
</feature>
<proteinExistence type="inferred from homology"/>
<sequence>MLKKLGIKGRVLLLTLLPTSLMALVLGGYFTWMQLSDLQTQLLQRGEMIAEQLASLVAPAMGNHNTQMLERIATQALEQQDVRAVSLLAPDRSLLAHAGPSMLNPPPAGNSSHMMQRSGSDATRYQLPVFGRHRNLAGDLIPDESDRLLGWVELELSHSGMLLRGYRSLFASLLLIAAGLAGTALLAVRMGRTINNPLTQIKQAVAQLKDGNLETRLPPLGSQELDELASGINRMASTLQNAQEELQHSIDQATEDVRQNLETIEIQNIELDLARKEALEASRIKSEFLANMSHEIRTPLNGILGFTHLLQKSELTPRQLDYLGTIEKSADSLLGIINEILDFSKIEAGKLVLDSIPFNLRDLLQDTLTILAPAAHAKQLELVSLVYRDTPLSLVGDPLRLKQILTNLVSNAIKFTREGTIVARAMLEEEHEDSVQLRISIQDTGIGLSNQDVRALFQAFSQADNSLSRQPGGTGLGLVISKRLIEQMGGEIGVDSTPGEGSEFWISLNLPKTRDDAEDLPGPPLLGRRVAVLENHELARQALQHQLEDCGLEVTPFNTLEALTNGITGVHQSEQAIDLAVLGITTNDMSPERLSQHIWDLEHLGCKVLVLCPTTEQTLFHLSVPNPHSQLQAKPACTRKLRRALSDLVTPRRARSEPEETLSSRAPRVLCVDDNPANLLLIQTLLEDMGAKVLAVDNGYAALNAIQTEPFDLVMMDVQMPGMDGRQSTEAIRQWESERHGTPLPIVALTAHAMANEKRALLQSGMDDYLTKPISERQLAQVVLKWTGLALRNQGPERASERPELGLELQVLDQDEGLRLAAGKADLAADMLAMLLASLDADREAIKAARAANDQNALIERVHRLHGATRYCGVPQLRAACQRSETLLKQEDAKAFAALDELDHAIGRLAAEARTNA</sequence>